<dbReference type="EC" id="2.3.1.31" evidence="1"/>
<dbReference type="EMBL" id="AF162658">
    <property type="protein sequence ID" value="AAD43584.1"/>
    <property type="molecule type" value="Genomic_DNA"/>
</dbReference>
<dbReference type="EMBL" id="AACD01000036">
    <property type="protein sequence ID" value="EAA63914.1"/>
    <property type="molecule type" value="Genomic_DNA"/>
</dbReference>
<dbReference type="EMBL" id="BN001307">
    <property type="protein sequence ID" value="CBF86426.1"/>
    <property type="molecule type" value="Genomic_DNA"/>
</dbReference>
<dbReference type="RefSeq" id="XP_659833.1">
    <property type="nucleotide sequence ID" value="XM_654741.1"/>
</dbReference>
<dbReference type="SMR" id="Q9Y875"/>
<dbReference type="FunCoup" id="Q9Y875">
    <property type="interactions" value="131"/>
</dbReference>
<dbReference type="STRING" id="227321.Q9Y875"/>
<dbReference type="ESTHER" id="emeni-met2">
    <property type="family name" value="Homoserine_transacetylase"/>
</dbReference>
<dbReference type="EnsemblFungi" id="CBF86426">
    <property type="protein sequence ID" value="CBF86426"/>
    <property type="gene ID" value="ANIA_02229"/>
</dbReference>
<dbReference type="KEGG" id="ani:ANIA_02229"/>
<dbReference type="VEuPathDB" id="FungiDB:AN2229"/>
<dbReference type="eggNOG" id="ENOG502QRIX">
    <property type="taxonomic scope" value="Eukaryota"/>
</dbReference>
<dbReference type="HOGENOM" id="CLU_028760_5_0_1"/>
<dbReference type="InParanoid" id="Q9Y875"/>
<dbReference type="OMA" id="LGGCQGT"/>
<dbReference type="OrthoDB" id="191364at2759"/>
<dbReference type="UniPathway" id="UPA00051">
    <property type="reaction ID" value="UER00074"/>
</dbReference>
<dbReference type="Proteomes" id="UP000000560">
    <property type="component" value="Chromosome VII"/>
</dbReference>
<dbReference type="GO" id="GO:0004414">
    <property type="term" value="F:homoserine O-acetyltransferase activity"/>
    <property type="evidence" value="ECO:0000318"/>
    <property type="project" value="GO_Central"/>
</dbReference>
<dbReference type="GO" id="GO:0071266">
    <property type="term" value="P:'de novo' L-methionine biosynthetic process"/>
    <property type="evidence" value="ECO:0007669"/>
    <property type="project" value="EnsemblFungi"/>
</dbReference>
<dbReference type="GO" id="GO:0009092">
    <property type="term" value="P:homoserine metabolic process"/>
    <property type="evidence" value="ECO:0007669"/>
    <property type="project" value="EnsemblFungi"/>
</dbReference>
<dbReference type="GO" id="GO:0009086">
    <property type="term" value="P:methionine biosynthetic process"/>
    <property type="evidence" value="ECO:0000318"/>
    <property type="project" value="GO_Central"/>
</dbReference>
<dbReference type="GO" id="GO:0006555">
    <property type="term" value="P:methionine metabolic process"/>
    <property type="evidence" value="ECO:0000270"/>
    <property type="project" value="AspGD"/>
</dbReference>
<dbReference type="Gene3D" id="3.40.50.1820">
    <property type="entry name" value="alpha/beta hydrolase"/>
    <property type="match status" value="1"/>
</dbReference>
<dbReference type="HAMAP" id="MF_00296">
    <property type="entry name" value="MetX_acyltransf"/>
    <property type="match status" value="1"/>
</dbReference>
<dbReference type="InterPro" id="IPR000073">
    <property type="entry name" value="AB_hydrolase_1"/>
</dbReference>
<dbReference type="InterPro" id="IPR029058">
    <property type="entry name" value="AB_hydrolase_fold"/>
</dbReference>
<dbReference type="InterPro" id="IPR008220">
    <property type="entry name" value="HAT_MetX-like"/>
</dbReference>
<dbReference type="NCBIfam" id="TIGR01392">
    <property type="entry name" value="homoserO_Ac_trn"/>
    <property type="match status" value="1"/>
</dbReference>
<dbReference type="PANTHER" id="PTHR32268">
    <property type="entry name" value="HOMOSERINE O-ACETYLTRANSFERASE"/>
    <property type="match status" value="1"/>
</dbReference>
<dbReference type="PANTHER" id="PTHR32268:SF11">
    <property type="entry name" value="HOMOSERINE O-ACETYLTRANSFERASE"/>
    <property type="match status" value="1"/>
</dbReference>
<dbReference type="Pfam" id="PF00561">
    <property type="entry name" value="Abhydrolase_1"/>
    <property type="match status" value="1"/>
</dbReference>
<dbReference type="PIRSF" id="PIRSF000443">
    <property type="entry name" value="Homoser_Ac_trans"/>
    <property type="match status" value="1"/>
</dbReference>
<dbReference type="SUPFAM" id="SSF53474">
    <property type="entry name" value="alpha/beta-Hydrolases"/>
    <property type="match status" value="1"/>
</dbReference>
<name>MET2_EMENI</name>
<evidence type="ECO:0000250" key="1">
    <source>
        <dbReference type="UniProtKB" id="O60062"/>
    </source>
</evidence>
<evidence type="ECO:0000255" key="2"/>
<evidence type="ECO:0000256" key="3">
    <source>
        <dbReference type="SAM" id="MobiDB-lite"/>
    </source>
</evidence>
<evidence type="ECO:0000305" key="4"/>
<accession>Q9Y875</accession>
<accession>C8VMS1</accession>
<accession>Q5BB51</accession>
<gene>
    <name type="primary">metE</name>
    <name type="ORF">AN2229</name>
</gene>
<organism>
    <name type="scientific">Emericella nidulans (strain FGSC A4 / ATCC 38163 / CBS 112.46 / NRRL 194 / M139)</name>
    <name type="common">Aspergillus nidulans</name>
    <dbReference type="NCBI Taxonomy" id="227321"/>
    <lineage>
        <taxon>Eukaryota</taxon>
        <taxon>Fungi</taxon>
        <taxon>Dikarya</taxon>
        <taxon>Ascomycota</taxon>
        <taxon>Pezizomycotina</taxon>
        <taxon>Eurotiomycetes</taxon>
        <taxon>Eurotiomycetidae</taxon>
        <taxon>Eurotiales</taxon>
        <taxon>Aspergillaceae</taxon>
        <taxon>Aspergillus</taxon>
        <taxon>Aspergillus subgen. Nidulantes</taxon>
    </lineage>
</organism>
<proteinExistence type="inferred from homology"/>
<comment type="function">
    <text evidence="1">Commits homoserine to the methionine biosynthesis pathway by catalyzing its O-acetylation.</text>
</comment>
<comment type="catalytic activity">
    <reaction evidence="1">
        <text>L-homoserine + acetyl-CoA = O-acetyl-L-homoserine + CoA</text>
        <dbReference type="Rhea" id="RHEA:13701"/>
        <dbReference type="ChEBI" id="CHEBI:57287"/>
        <dbReference type="ChEBI" id="CHEBI:57288"/>
        <dbReference type="ChEBI" id="CHEBI:57476"/>
        <dbReference type="ChEBI" id="CHEBI:57716"/>
        <dbReference type="EC" id="2.3.1.31"/>
    </reaction>
    <physiologicalReaction direction="left-to-right" evidence="1">
        <dbReference type="Rhea" id="RHEA:13702"/>
    </physiologicalReaction>
</comment>
<comment type="pathway">
    <text evidence="1">Amino-acid biosynthesis; L-methionine biosynthesis via de novo pathway; O-acetyl-L-homoserine from L-homoserine: step 1/1.</text>
</comment>
<comment type="similarity">
    <text evidence="4">Belongs to the AB hydrolase superfamily. MetX family.</text>
</comment>
<reference key="1">
    <citation type="journal article" date="2001" name="Biochim. Biophys. Acta">
        <title>The Aspergillus nidulans metE gene is regulated by a second system independent from sulphur metabolite repression.</title>
        <authorList>
            <person name="Grynberg M."/>
            <person name="Piotrowska M."/>
            <person name="Pizzinini E."/>
            <person name="Turner G."/>
            <person name="Paszewski A."/>
        </authorList>
    </citation>
    <scope>NUCLEOTIDE SEQUENCE [GENOMIC DNA]</scope>
</reference>
<reference key="2">
    <citation type="journal article" date="2005" name="Nature">
        <title>Sequencing of Aspergillus nidulans and comparative analysis with A. fumigatus and A. oryzae.</title>
        <authorList>
            <person name="Galagan J.E."/>
            <person name="Calvo S.E."/>
            <person name="Cuomo C."/>
            <person name="Ma L.-J."/>
            <person name="Wortman J.R."/>
            <person name="Batzoglou S."/>
            <person name="Lee S.-I."/>
            <person name="Bastuerkmen M."/>
            <person name="Spevak C.C."/>
            <person name="Clutterbuck J."/>
            <person name="Kapitonov V."/>
            <person name="Jurka J."/>
            <person name="Scazzocchio C."/>
            <person name="Farman M.L."/>
            <person name="Butler J."/>
            <person name="Purcell S."/>
            <person name="Harris S."/>
            <person name="Braus G.H."/>
            <person name="Draht O."/>
            <person name="Busch S."/>
            <person name="D'Enfert C."/>
            <person name="Bouchier C."/>
            <person name="Goldman G.H."/>
            <person name="Bell-Pedersen D."/>
            <person name="Griffiths-Jones S."/>
            <person name="Doonan J.H."/>
            <person name="Yu J."/>
            <person name="Vienken K."/>
            <person name="Pain A."/>
            <person name="Freitag M."/>
            <person name="Selker E.U."/>
            <person name="Archer D.B."/>
            <person name="Penalva M.A."/>
            <person name="Oakley B.R."/>
            <person name="Momany M."/>
            <person name="Tanaka T."/>
            <person name="Kumagai T."/>
            <person name="Asai K."/>
            <person name="Machida M."/>
            <person name="Nierman W.C."/>
            <person name="Denning D.W."/>
            <person name="Caddick M.X."/>
            <person name="Hynes M."/>
            <person name="Paoletti M."/>
            <person name="Fischer R."/>
            <person name="Miller B.L."/>
            <person name="Dyer P.S."/>
            <person name="Sachs M.S."/>
            <person name="Osmani S.A."/>
            <person name="Birren B.W."/>
        </authorList>
    </citation>
    <scope>NUCLEOTIDE SEQUENCE [LARGE SCALE GENOMIC DNA]</scope>
    <source>
        <strain>FGSC A4 / ATCC 38163 / CBS 112.46 / NRRL 194 / M139</strain>
    </source>
</reference>
<reference key="3">
    <citation type="journal article" date="2009" name="Fungal Genet. Biol.">
        <title>The 2008 update of the Aspergillus nidulans genome annotation: a community effort.</title>
        <authorList>
            <person name="Wortman J.R."/>
            <person name="Gilsenan J.M."/>
            <person name="Joardar V."/>
            <person name="Deegan J."/>
            <person name="Clutterbuck J."/>
            <person name="Andersen M.R."/>
            <person name="Archer D."/>
            <person name="Bencina M."/>
            <person name="Braus G."/>
            <person name="Coutinho P."/>
            <person name="von Dohren H."/>
            <person name="Doonan J."/>
            <person name="Driessen A.J."/>
            <person name="Durek P."/>
            <person name="Espeso E."/>
            <person name="Fekete E."/>
            <person name="Flipphi M."/>
            <person name="Estrada C.G."/>
            <person name="Geysens S."/>
            <person name="Goldman G."/>
            <person name="de Groot P.W."/>
            <person name="Hansen K."/>
            <person name="Harris S.D."/>
            <person name="Heinekamp T."/>
            <person name="Helmstaedt K."/>
            <person name="Henrissat B."/>
            <person name="Hofmann G."/>
            <person name="Homan T."/>
            <person name="Horio T."/>
            <person name="Horiuchi H."/>
            <person name="James S."/>
            <person name="Jones M."/>
            <person name="Karaffa L."/>
            <person name="Karanyi Z."/>
            <person name="Kato M."/>
            <person name="Keller N."/>
            <person name="Kelly D.E."/>
            <person name="Kiel J.A."/>
            <person name="Kim J.M."/>
            <person name="van der Klei I.J."/>
            <person name="Klis F.M."/>
            <person name="Kovalchuk A."/>
            <person name="Krasevec N."/>
            <person name="Kubicek C.P."/>
            <person name="Liu B."/>
            <person name="Maccabe A."/>
            <person name="Meyer V."/>
            <person name="Mirabito P."/>
            <person name="Miskei M."/>
            <person name="Mos M."/>
            <person name="Mullins J."/>
            <person name="Nelson D.R."/>
            <person name="Nielsen J."/>
            <person name="Oakley B.R."/>
            <person name="Osmani S.A."/>
            <person name="Pakula T."/>
            <person name="Paszewski A."/>
            <person name="Paulsen I."/>
            <person name="Pilsyk S."/>
            <person name="Pocsi I."/>
            <person name="Punt P.J."/>
            <person name="Ram A.F."/>
            <person name="Ren Q."/>
            <person name="Robellet X."/>
            <person name="Robson G."/>
            <person name="Seiboth B."/>
            <person name="van Solingen P."/>
            <person name="Specht T."/>
            <person name="Sun J."/>
            <person name="Taheri-Talesh N."/>
            <person name="Takeshita N."/>
            <person name="Ussery D."/>
            <person name="vanKuyk P.A."/>
            <person name="Visser H."/>
            <person name="van de Vondervoort P.J."/>
            <person name="de Vries R.P."/>
            <person name="Walton J."/>
            <person name="Xiang X."/>
            <person name="Xiong Y."/>
            <person name="Zeng A.P."/>
            <person name="Brandt B.W."/>
            <person name="Cornell M.J."/>
            <person name="van den Hondel C.A."/>
            <person name="Visser J."/>
            <person name="Oliver S.G."/>
            <person name="Turner G."/>
        </authorList>
    </citation>
    <scope>GENOME REANNOTATION</scope>
    <source>
        <strain>FGSC A4 / ATCC 38163 / CBS 112.46 / NRRL 194 / M139</strain>
    </source>
</reference>
<feature type="chain" id="PRO_0000155755" description="Homoserine O-acetyltransferase">
    <location>
        <begin position="1"/>
        <end position="489"/>
    </location>
</feature>
<feature type="domain" description="AB hydrolase-1" evidence="2">
    <location>
        <begin position="63"/>
        <end position="435"/>
    </location>
</feature>
<feature type="region of interest" description="Disordered" evidence="3">
    <location>
        <begin position="247"/>
        <end position="272"/>
    </location>
</feature>
<feature type="active site" evidence="2">
    <location>
        <position position="162"/>
    </location>
</feature>
<feature type="active site" description="Nucleophile" evidence="1">
    <location>
        <position position="162"/>
    </location>
</feature>
<feature type="active site" evidence="1">
    <location>
        <position position="401"/>
    </location>
</feature>
<feature type="active site" evidence="1">
    <location>
        <position position="430"/>
    </location>
</feature>
<keyword id="KW-0012">Acyltransferase</keyword>
<keyword id="KW-0028">Amino-acid biosynthesis</keyword>
<keyword id="KW-0486">Methionine biosynthesis</keyword>
<keyword id="KW-1185">Reference proteome</keyword>
<keyword id="KW-0808">Transferase</keyword>
<protein>
    <recommendedName>
        <fullName>Homoserine O-acetyltransferase</fullName>
        <ecNumber evidence="1">2.3.1.31</ecNumber>
    </recommendedName>
    <alternativeName>
        <fullName>Homoserine O-trans-acetylase</fullName>
    </alternativeName>
</protein>
<sequence>MTTEQPTARLQRVDSQPENPFSALIEDQSIVIIPTFTLESGVTLYNVPVAYTTRGTLSPSGDNALVICHALSGSADVADWWGPLLGGPGQAFDISRFFVVCLNSLGSPYGSASAVTYKDGNPEKGLYGPEFPLTTVRDDVRIHKMVLDDLGIKQIAAVVGGSMGGMLTLEYAYFGKDYVRAIVPIATSARHSAWCISWGEAQRQSIYSDPKYENGYYSFDEPPAAGLGAARMSALLTYRSRNSFESRFGRNVPDPSKRQNINGTERLPTPPNEHWAIHNDGHKGNWSGRNSPAPEKPAEKTEVQYMDPQFSGTKTFSKSVSTTDGNAQKRPATYFSAQSYLRYQGDKFVKRFDANCYIAITRKLDTHDVSRHRARPDSENPVREALSQIQQPALVLGIESDGLFTFEEQKEIAEGIPDSRLKRIDSPEGHDAFLLQFEQVNQYILEFFREVLPDIMSKTPTDGAAIDGVGKLTKSSTFGEAEVEDITAW</sequence>